<dbReference type="EMBL" id="CR382124">
    <property type="protein sequence ID" value="CAH00204.1"/>
    <property type="molecule type" value="Genomic_DNA"/>
</dbReference>
<dbReference type="RefSeq" id="XP_453108.1">
    <property type="nucleotide sequence ID" value="XM_453108.1"/>
</dbReference>
<dbReference type="SMR" id="Q6CSI1"/>
<dbReference type="FunCoup" id="Q6CSI1">
    <property type="interactions" value="1136"/>
</dbReference>
<dbReference type="STRING" id="284590.Q6CSI1"/>
<dbReference type="PaxDb" id="284590-Q6CSI1"/>
<dbReference type="KEGG" id="kla:KLLA0_D00814g"/>
<dbReference type="eggNOG" id="KOG0264">
    <property type="taxonomic scope" value="Eukaryota"/>
</dbReference>
<dbReference type="HOGENOM" id="CLU_020445_3_1_1"/>
<dbReference type="InParanoid" id="Q6CSI1"/>
<dbReference type="OMA" id="PHEEGCL"/>
<dbReference type="Proteomes" id="UP000000598">
    <property type="component" value="Chromosome D"/>
</dbReference>
<dbReference type="GO" id="GO:0005737">
    <property type="term" value="C:cytoplasm"/>
    <property type="evidence" value="ECO:0007669"/>
    <property type="project" value="UniProtKB-SubCell"/>
</dbReference>
<dbReference type="GO" id="GO:0005634">
    <property type="term" value="C:nucleus"/>
    <property type="evidence" value="ECO:0007669"/>
    <property type="project" value="UniProtKB-SubCell"/>
</dbReference>
<dbReference type="GO" id="GO:0006325">
    <property type="term" value="P:chromatin organization"/>
    <property type="evidence" value="ECO:0007669"/>
    <property type="project" value="UniProtKB-KW"/>
</dbReference>
<dbReference type="Gene3D" id="2.130.10.10">
    <property type="entry name" value="YVTN repeat-like/Quinoprotein amine dehydrogenase"/>
    <property type="match status" value="1"/>
</dbReference>
<dbReference type="InterPro" id="IPR020472">
    <property type="entry name" value="G-protein_beta_WD-40_rep"/>
</dbReference>
<dbReference type="InterPro" id="IPR022052">
    <property type="entry name" value="Histone-bd_RBBP4-like_N"/>
</dbReference>
<dbReference type="InterPro" id="IPR015943">
    <property type="entry name" value="WD40/YVTN_repeat-like_dom_sf"/>
</dbReference>
<dbReference type="InterPro" id="IPR019775">
    <property type="entry name" value="WD40_repeat_CS"/>
</dbReference>
<dbReference type="InterPro" id="IPR036322">
    <property type="entry name" value="WD40_repeat_dom_sf"/>
</dbReference>
<dbReference type="InterPro" id="IPR001680">
    <property type="entry name" value="WD40_rpt"/>
</dbReference>
<dbReference type="InterPro" id="IPR050459">
    <property type="entry name" value="WD_repeat_RBAP46/RBAP48/MSI1"/>
</dbReference>
<dbReference type="PANTHER" id="PTHR22850">
    <property type="entry name" value="WD40 REPEAT FAMILY"/>
    <property type="match status" value="1"/>
</dbReference>
<dbReference type="Pfam" id="PF12265">
    <property type="entry name" value="CAF1C_H4-bd"/>
    <property type="match status" value="1"/>
</dbReference>
<dbReference type="Pfam" id="PF00400">
    <property type="entry name" value="WD40"/>
    <property type="match status" value="3"/>
</dbReference>
<dbReference type="PRINTS" id="PR00320">
    <property type="entry name" value="GPROTEINBRPT"/>
</dbReference>
<dbReference type="SMART" id="SM00320">
    <property type="entry name" value="WD40"/>
    <property type="match status" value="6"/>
</dbReference>
<dbReference type="SUPFAM" id="SSF50978">
    <property type="entry name" value="WD40 repeat-like"/>
    <property type="match status" value="1"/>
</dbReference>
<dbReference type="PROSITE" id="PS00678">
    <property type="entry name" value="WD_REPEATS_1"/>
    <property type="match status" value="2"/>
</dbReference>
<dbReference type="PROSITE" id="PS50082">
    <property type="entry name" value="WD_REPEATS_2"/>
    <property type="match status" value="2"/>
</dbReference>
<dbReference type="PROSITE" id="PS50294">
    <property type="entry name" value="WD_REPEATS_REGION"/>
    <property type="match status" value="1"/>
</dbReference>
<protein>
    <recommendedName>
        <fullName>Histone acetyltransferase type B subunit 2</fullName>
    </recommendedName>
</protein>
<keyword id="KW-0156">Chromatin regulator</keyword>
<keyword id="KW-0963">Cytoplasm</keyword>
<keyword id="KW-0539">Nucleus</keyword>
<keyword id="KW-1185">Reference proteome</keyword>
<keyword id="KW-0677">Repeat</keyword>
<keyword id="KW-0853">WD repeat</keyword>
<gene>
    <name type="primary">HAT2</name>
    <name type="ordered locus">KLLA0D00814g</name>
</gene>
<accession>Q6CSI1</accession>
<reference key="1">
    <citation type="journal article" date="2004" name="Nature">
        <title>Genome evolution in yeasts.</title>
        <authorList>
            <person name="Dujon B."/>
            <person name="Sherman D."/>
            <person name="Fischer G."/>
            <person name="Durrens P."/>
            <person name="Casaregola S."/>
            <person name="Lafontaine I."/>
            <person name="de Montigny J."/>
            <person name="Marck C."/>
            <person name="Neuveglise C."/>
            <person name="Talla E."/>
            <person name="Goffard N."/>
            <person name="Frangeul L."/>
            <person name="Aigle M."/>
            <person name="Anthouard V."/>
            <person name="Babour A."/>
            <person name="Barbe V."/>
            <person name="Barnay S."/>
            <person name="Blanchin S."/>
            <person name="Beckerich J.-M."/>
            <person name="Beyne E."/>
            <person name="Bleykasten C."/>
            <person name="Boisrame A."/>
            <person name="Boyer J."/>
            <person name="Cattolico L."/>
            <person name="Confanioleri F."/>
            <person name="de Daruvar A."/>
            <person name="Despons L."/>
            <person name="Fabre E."/>
            <person name="Fairhead C."/>
            <person name="Ferry-Dumazet H."/>
            <person name="Groppi A."/>
            <person name="Hantraye F."/>
            <person name="Hennequin C."/>
            <person name="Jauniaux N."/>
            <person name="Joyet P."/>
            <person name="Kachouri R."/>
            <person name="Kerrest A."/>
            <person name="Koszul R."/>
            <person name="Lemaire M."/>
            <person name="Lesur I."/>
            <person name="Ma L."/>
            <person name="Muller H."/>
            <person name="Nicaud J.-M."/>
            <person name="Nikolski M."/>
            <person name="Oztas S."/>
            <person name="Ozier-Kalogeropoulos O."/>
            <person name="Pellenz S."/>
            <person name="Potier S."/>
            <person name="Richard G.-F."/>
            <person name="Straub M.-L."/>
            <person name="Suleau A."/>
            <person name="Swennen D."/>
            <person name="Tekaia F."/>
            <person name="Wesolowski-Louvel M."/>
            <person name="Westhof E."/>
            <person name="Wirth B."/>
            <person name="Zeniou-Meyer M."/>
            <person name="Zivanovic Y."/>
            <person name="Bolotin-Fukuhara M."/>
            <person name="Thierry A."/>
            <person name="Bouchier C."/>
            <person name="Caudron B."/>
            <person name="Scarpelli C."/>
            <person name="Gaillardin C."/>
            <person name="Weissenbach J."/>
            <person name="Wincker P."/>
            <person name="Souciet J.-L."/>
        </authorList>
    </citation>
    <scope>NUCLEOTIDE SEQUENCE [LARGE SCALE GENOMIC DNA]</scope>
    <source>
        <strain>ATCC 8585 / CBS 2359 / DSM 70799 / NBRC 1267 / NRRL Y-1140 / WM37</strain>
    </source>
</reference>
<organism>
    <name type="scientific">Kluyveromyces lactis (strain ATCC 8585 / CBS 2359 / DSM 70799 / NBRC 1267 / NRRL Y-1140 / WM37)</name>
    <name type="common">Yeast</name>
    <name type="synonym">Candida sphaerica</name>
    <dbReference type="NCBI Taxonomy" id="284590"/>
    <lineage>
        <taxon>Eukaryota</taxon>
        <taxon>Fungi</taxon>
        <taxon>Dikarya</taxon>
        <taxon>Ascomycota</taxon>
        <taxon>Saccharomycotina</taxon>
        <taxon>Saccharomycetes</taxon>
        <taxon>Saccharomycetales</taxon>
        <taxon>Saccharomycetaceae</taxon>
        <taxon>Kluyveromyces</taxon>
    </lineage>
</organism>
<comment type="function">
    <text evidence="2">Regulatory subunit of the histone acetylase B (HAT-B) complex. The complex acetylates 'Lys-12' of histone H4 which is required for telomeric silencing.</text>
</comment>
<comment type="subunit">
    <text evidence="2">Component of the HAT-B complex composed of at least HAT1 and HAT2. The HAT-B complex binds to histone H4 tail.</text>
</comment>
<comment type="subcellular location">
    <subcellularLocation>
        <location evidence="1">Cytoplasm</location>
    </subcellularLocation>
    <subcellularLocation>
        <location evidence="1">Nucleus</location>
    </subcellularLocation>
</comment>
<comment type="similarity">
    <text evidence="3">Belongs to the WD repeat RBAP46/RBAP48/MSI1 family.</text>
</comment>
<name>HAT2_KLULA</name>
<evidence type="ECO:0000250" key="1"/>
<evidence type="ECO:0000250" key="2">
    <source>
        <dbReference type="UniProtKB" id="P39984"/>
    </source>
</evidence>
<evidence type="ECO:0000305" key="3"/>
<proteinExistence type="inferred from homology"/>
<sequence>MTEVEEPEQPTTINEEYDLWVSNVPMMYDFVSETRLTWPSLTVQWLPTEMQPREVDGQQLLRQELLIGTLTTDNEPNYLKIAAIDLPENVTSSKPSVSDDAKENELSHRQSKIKIVRKFKHEQEVTRARYMPQSPNIIATLNGAGIVYIFDRNIKEKDHGAIASFSYHKENGYGLAFNPTVSGQLLSASDDGTVALWDVTSTANKSPSQTFDVHTDIVNDCKWHEFQSSLFGTVSEDNTLIIHDTNSDRAIQKLSVSSAFNTLAFSKRSENLLAAAGTDSNVYLYDLRRLQKPLHSMAGHEDSVTSLEFSPHQDGLLTSSGSDRRIIMWDLFNIGAEQQPDDAYDGVPELFMMHGGHRSPVNEFSHNSNVPWLMCSVEEENVLQIWKPANKIVRPPQPPADFDITTLE</sequence>
<feature type="chain" id="PRO_0000227741" description="Histone acetyltransferase type B subunit 2">
    <location>
        <begin position="1"/>
        <end position="408"/>
    </location>
</feature>
<feature type="repeat" description="WD 1">
    <location>
        <begin position="120"/>
        <end position="160"/>
    </location>
</feature>
<feature type="repeat" description="WD 2">
    <location>
        <begin position="167"/>
        <end position="207"/>
    </location>
</feature>
<feature type="repeat" description="WD 3">
    <location>
        <begin position="213"/>
        <end position="253"/>
    </location>
</feature>
<feature type="repeat" description="WD 4">
    <location>
        <begin position="255"/>
        <end position="295"/>
    </location>
</feature>
<feature type="repeat" description="WD 5">
    <location>
        <begin position="299"/>
        <end position="339"/>
    </location>
</feature>
<feature type="repeat" description="WD 6">
    <location>
        <begin position="356"/>
        <end position="396"/>
    </location>
</feature>
<feature type="region of interest" description="Interaction with the histone H4 N-terminus" evidence="2">
    <location>
        <begin position="341"/>
        <end position="345"/>
    </location>
</feature>
<feature type="site" description="Important for interaction with HAT1" evidence="2">
    <location>
        <position position="272"/>
    </location>
</feature>